<accession>B1VXM7</accession>
<gene>
    <name evidence="1" type="primary">dut</name>
    <name type="ordered locus">SGR_1664</name>
</gene>
<protein>
    <recommendedName>
        <fullName evidence="1">Deoxyuridine 5'-triphosphate nucleotidohydrolase</fullName>
        <shortName evidence="1">dUTPase</shortName>
        <ecNumber evidence="1">3.6.1.23</ecNumber>
    </recommendedName>
    <alternativeName>
        <fullName evidence="1">dUTP pyrophosphatase</fullName>
    </alternativeName>
</protein>
<sequence length="176" mass="18220">MTRGPVDVLIRLLDPDVPIPSYGHPGDAGADLVTTEAAELAPGERAVLPTGVSIALPDGYAAFVHPRSGLAARCGVALVNAPGTVDAGYRGEIKVIVVNLDPRESVRFERFDRIAQLVVQQVEKVRFHEVAELPGSARAEGGFGSTGGHASVDGAEGGITHGGNSYASVVSDREGQ</sequence>
<proteinExistence type="inferred from homology"/>
<feature type="chain" id="PRO_1000094996" description="Deoxyuridine 5'-triphosphate nucleotidohydrolase">
    <location>
        <begin position="1"/>
        <end position="176"/>
    </location>
</feature>
<feature type="region of interest" description="Disordered" evidence="2">
    <location>
        <begin position="141"/>
        <end position="176"/>
    </location>
</feature>
<feature type="binding site" evidence="1">
    <location>
        <begin position="67"/>
        <end position="69"/>
    </location>
    <ligand>
        <name>substrate</name>
    </ligand>
</feature>
<feature type="binding site" evidence="1">
    <location>
        <position position="80"/>
    </location>
    <ligand>
        <name>substrate</name>
    </ligand>
</feature>
<feature type="binding site" evidence="1">
    <location>
        <begin position="84"/>
        <end position="86"/>
    </location>
    <ligand>
        <name>substrate</name>
    </ligand>
</feature>
<feature type="binding site" evidence="1">
    <location>
        <position position="94"/>
    </location>
    <ligand>
        <name>substrate</name>
    </ligand>
</feature>
<comment type="function">
    <text evidence="1">This enzyme is involved in nucleotide metabolism: it produces dUMP, the immediate precursor of thymidine nucleotides and it decreases the intracellular concentration of dUTP so that uracil cannot be incorporated into DNA.</text>
</comment>
<comment type="catalytic activity">
    <reaction evidence="1">
        <text>dUTP + H2O = dUMP + diphosphate + H(+)</text>
        <dbReference type="Rhea" id="RHEA:10248"/>
        <dbReference type="ChEBI" id="CHEBI:15377"/>
        <dbReference type="ChEBI" id="CHEBI:15378"/>
        <dbReference type="ChEBI" id="CHEBI:33019"/>
        <dbReference type="ChEBI" id="CHEBI:61555"/>
        <dbReference type="ChEBI" id="CHEBI:246422"/>
        <dbReference type="EC" id="3.6.1.23"/>
    </reaction>
</comment>
<comment type="cofactor">
    <cofactor evidence="1">
        <name>Mg(2+)</name>
        <dbReference type="ChEBI" id="CHEBI:18420"/>
    </cofactor>
</comment>
<comment type="pathway">
    <text evidence="1">Pyrimidine metabolism; dUMP biosynthesis; dUMP from dCTP (dUTP route): step 2/2.</text>
</comment>
<comment type="similarity">
    <text evidence="1">Belongs to the dUTPase family.</text>
</comment>
<reference key="1">
    <citation type="journal article" date="2008" name="J. Bacteriol.">
        <title>Genome sequence of the streptomycin-producing microorganism Streptomyces griseus IFO 13350.</title>
        <authorList>
            <person name="Ohnishi Y."/>
            <person name="Ishikawa J."/>
            <person name="Hara H."/>
            <person name="Suzuki H."/>
            <person name="Ikenoya M."/>
            <person name="Ikeda H."/>
            <person name="Yamashita A."/>
            <person name="Hattori M."/>
            <person name="Horinouchi S."/>
        </authorList>
    </citation>
    <scope>NUCLEOTIDE SEQUENCE [LARGE SCALE GENOMIC DNA]</scope>
    <source>
        <strain>JCM 4626 / CBS 651.72 / NBRC 13350 / KCC S-0626 / ISP 5235</strain>
    </source>
</reference>
<name>DUT_STRGG</name>
<evidence type="ECO:0000255" key="1">
    <source>
        <dbReference type="HAMAP-Rule" id="MF_00116"/>
    </source>
</evidence>
<evidence type="ECO:0000256" key="2">
    <source>
        <dbReference type="SAM" id="MobiDB-lite"/>
    </source>
</evidence>
<organism>
    <name type="scientific">Streptomyces griseus subsp. griseus (strain JCM 4626 / CBS 651.72 / NBRC 13350 / KCC S-0626 / ISP 5235)</name>
    <dbReference type="NCBI Taxonomy" id="455632"/>
    <lineage>
        <taxon>Bacteria</taxon>
        <taxon>Bacillati</taxon>
        <taxon>Actinomycetota</taxon>
        <taxon>Actinomycetes</taxon>
        <taxon>Kitasatosporales</taxon>
        <taxon>Streptomycetaceae</taxon>
        <taxon>Streptomyces</taxon>
    </lineage>
</organism>
<keyword id="KW-0378">Hydrolase</keyword>
<keyword id="KW-0460">Magnesium</keyword>
<keyword id="KW-0479">Metal-binding</keyword>
<keyword id="KW-0546">Nucleotide metabolism</keyword>
<dbReference type="EC" id="3.6.1.23" evidence="1"/>
<dbReference type="EMBL" id="AP009493">
    <property type="protein sequence ID" value="BAG18493.1"/>
    <property type="molecule type" value="Genomic_DNA"/>
</dbReference>
<dbReference type="RefSeq" id="WP_012378702.1">
    <property type="nucleotide sequence ID" value="NC_010572.1"/>
</dbReference>
<dbReference type="SMR" id="B1VXM7"/>
<dbReference type="KEGG" id="sgr:SGR_1664"/>
<dbReference type="PATRIC" id="fig|455632.4.peg.1685"/>
<dbReference type="eggNOG" id="COG0756">
    <property type="taxonomic scope" value="Bacteria"/>
</dbReference>
<dbReference type="HOGENOM" id="CLU_068508_1_3_11"/>
<dbReference type="UniPathway" id="UPA00610">
    <property type="reaction ID" value="UER00666"/>
</dbReference>
<dbReference type="Proteomes" id="UP000001685">
    <property type="component" value="Chromosome"/>
</dbReference>
<dbReference type="GO" id="GO:0004170">
    <property type="term" value="F:dUTP diphosphatase activity"/>
    <property type="evidence" value="ECO:0007669"/>
    <property type="project" value="UniProtKB-UniRule"/>
</dbReference>
<dbReference type="GO" id="GO:0000287">
    <property type="term" value="F:magnesium ion binding"/>
    <property type="evidence" value="ECO:0007669"/>
    <property type="project" value="UniProtKB-UniRule"/>
</dbReference>
<dbReference type="GO" id="GO:0006226">
    <property type="term" value="P:dUMP biosynthetic process"/>
    <property type="evidence" value="ECO:0007669"/>
    <property type="project" value="UniProtKB-UniRule"/>
</dbReference>
<dbReference type="GO" id="GO:0046081">
    <property type="term" value="P:dUTP catabolic process"/>
    <property type="evidence" value="ECO:0007669"/>
    <property type="project" value="InterPro"/>
</dbReference>
<dbReference type="CDD" id="cd07557">
    <property type="entry name" value="trimeric_dUTPase"/>
    <property type="match status" value="1"/>
</dbReference>
<dbReference type="FunFam" id="2.70.40.10:FF:000008">
    <property type="entry name" value="Deoxyuridine 5'-triphosphate nucleotidohydrolase"/>
    <property type="match status" value="1"/>
</dbReference>
<dbReference type="Gene3D" id="2.70.40.10">
    <property type="match status" value="1"/>
</dbReference>
<dbReference type="HAMAP" id="MF_00116">
    <property type="entry name" value="dUTPase_bact"/>
    <property type="match status" value="1"/>
</dbReference>
<dbReference type="InterPro" id="IPR008181">
    <property type="entry name" value="dUTPase"/>
</dbReference>
<dbReference type="InterPro" id="IPR029054">
    <property type="entry name" value="dUTPase-like"/>
</dbReference>
<dbReference type="InterPro" id="IPR036157">
    <property type="entry name" value="dUTPase-like_sf"/>
</dbReference>
<dbReference type="InterPro" id="IPR033704">
    <property type="entry name" value="dUTPase_trimeric"/>
</dbReference>
<dbReference type="NCBIfam" id="TIGR00576">
    <property type="entry name" value="dut"/>
    <property type="match status" value="1"/>
</dbReference>
<dbReference type="NCBIfam" id="NF001862">
    <property type="entry name" value="PRK00601.1"/>
    <property type="match status" value="1"/>
</dbReference>
<dbReference type="PANTHER" id="PTHR11241">
    <property type="entry name" value="DEOXYURIDINE 5'-TRIPHOSPHATE NUCLEOTIDOHYDROLASE"/>
    <property type="match status" value="1"/>
</dbReference>
<dbReference type="PANTHER" id="PTHR11241:SF0">
    <property type="entry name" value="DEOXYURIDINE 5'-TRIPHOSPHATE NUCLEOTIDOHYDROLASE"/>
    <property type="match status" value="1"/>
</dbReference>
<dbReference type="Pfam" id="PF00692">
    <property type="entry name" value="dUTPase"/>
    <property type="match status" value="1"/>
</dbReference>
<dbReference type="SUPFAM" id="SSF51283">
    <property type="entry name" value="dUTPase-like"/>
    <property type="match status" value="1"/>
</dbReference>